<comment type="function">
    <text evidence="1">Catalyzes the conversion of L-arabinose to L-ribulose.</text>
</comment>
<comment type="catalytic activity">
    <reaction evidence="1">
        <text>beta-L-arabinopyranose = L-ribulose</text>
        <dbReference type="Rhea" id="RHEA:14821"/>
        <dbReference type="ChEBI" id="CHEBI:16880"/>
        <dbReference type="ChEBI" id="CHEBI:40886"/>
        <dbReference type="EC" id="5.3.1.4"/>
    </reaction>
</comment>
<comment type="cofactor">
    <cofactor evidence="1">
        <name>Mn(2+)</name>
        <dbReference type="ChEBI" id="CHEBI:29035"/>
    </cofactor>
    <text evidence="1">Binds 1 Mn(2+) ion per subunit.</text>
</comment>
<comment type="pathway">
    <text evidence="1">Carbohydrate degradation; L-arabinose degradation via L-ribulose; D-xylulose 5-phosphate from L-arabinose (bacterial route): step 1/3.</text>
</comment>
<comment type="similarity">
    <text evidence="1">Belongs to the arabinose isomerase family.</text>
</comment>
<feature type="chain" id="PRO_1000050908" description="L-arabinose isomerase">
    <location>
        <begin position="1"/>
        <end position="496"/>
    </location>
</feature>
<feature type="binding site" evidence="1">
    <location>
        <position position="302"/>
    </location>
    <ligand>
        <name>Mn(2+)</name>
        <dbReference type="ChEBI" id="CHEBI:29035"/>
    </ligand>
</feature>
<feature type="binding site" evidence="1">
    <location>
        <position position="329"/>
    </location>
    <ligand>
        <name>Mn(2+)</name>
        <dbReference type="ChEBI" id="CHEBI:29035"/>
    </ligand>
</feature>
<feature type="binding site" evidence="1">
    <location>
        <position position="346"/>
    </location>
    <ligand>
        <name>Mn(2+)</name>
        <dbReference type="ChEBI" id="CHEBI:29035"/>
    </ligand>
</feature>
<feature type="binding site" evidence="1">
    <location>
        <position position="445"/>
    </location>
    <ligand>
        <name>Mn(2+)</name>
        <dbReference type="ChEBI" id="CHEBI:29035"/>
    </ligand>
</feature>
<dbReference type="EC" id="5.3.1.4" evidence="1"/>
<dbReference type="EMBL" id="CP000702">
    <property type="protein sequence ID" value="ABQ46668.1"/>
    <property type="molecule type" value="Genomic_DNA"/>
</dbReference>
<dbReference type="RefSeq" id="WP_011943258.1">
    <property type="nucleotide sequence ID" value="NC_009486.1"/>
</dbReference>
<dbReference type="SMR" id="A5IKE5"/>
<dbReference type="STRING" id="390874.Tpet_0648"/>
<dbReference type="KEGG" id="tpt:Tpet_0648"/>
<dbReference type="eggNOG" id="COG2160">
    <property type="taxonomic scope" value="Bacteria"/>
</dbReference>
<dbReference type="HOGENOM" id="CLU_045663_0_0_0"/>
<dbReference type="UniPathway" id="UPA00145">
    <property type="reaction ID" value="UER00565"/>
</dbReference>
<dbReference type="Proteomes" id="UP000006558">
    <property type="component" value="Chromosome"/>
</dbReference>
<dbReference type="GO" id="GO:0005829">
    <property type="term" value="C:cytosol"/>
    <property type="evidence" value="ECO:0007669"/>
    <property type="project" value="TreeGrafter"/>
</dbReference>
<dbReference type="GO" id="GO:0008733">
    <property type="term" value="F:L-arabinose isomerase activity"/>
    <property type="evidence" value="ECO:0007669"/>
    <property type="project" value="UniProtKB-UniRule"/>
</dbReference>
<dbReference type="GO" id="GO:0030145">
    <property type="term" value="F:manganese ion binding"/>
    <property type="evidence" value="ECO:0007669"/>
    <property type="project" value="UniProtKB-UniRule"/>
</dbReference>
<dbReference type="GO" id="GO:0019569">
    <property type="term" value="P:L-arabinose catabolic process to xylulose 5-phosphate"/>
    <property type="evidence" value="ECO:0007669"/>
    <property type="project" value="UniProtKB-UniRule"/>
</dbReference>
<dbReference type="CDD" id="cd03557">
    <property type="entry name" value="L-arabinose_isomerase"/>
    <property type="match status" value="1"/>
</dbReference>
<dbReference type="Gene3D" id="3.40.50.10940">
    <property type="match status" value="1"/>
</dbReference>
<dbReference type="HAMAP" id="MF_00519">
    <property type="entry name" value="Arabinose_Isome"/>
    <property type="match status" value="1"/>
</dbReference>
<dbReference type="InterPro" id="IPR024664">
    <property type="entry name" value="Ara_Isoase_C"/>
</dbReference>
<dbReference type="InterPro" id="IPR055390">
    <property type="entry name" value="AraA_central"/>
</dbReference>
<dbReference type="InterPro" id="IPR055389">
    <property type="entry name" value="AraA_N"/>
</dbReference>
<dbReference type="InterPro" id="IPR038583">
    <property type="entry name" value="AraA_N_sf"/>
</dbReference>
<dbReference type="InterPro" id="IPR004216">
    <property type="entry name" value="Fuc/Ara_isomerase_C"/>
</dbReference>
<dbReference type="InterPro" id="IPR009015">
    <property type="entry name" value="Fucose_isomerase_N/cen_sf"/>
</dbReference>
<dbReference type="InterPro" id="IPR003762">
    <property type="entry name" value="Lara_isomerase"/>
</dbReference>
<dbReference type="NCBIfam" id="NF002795">
    <property type="entry name" value="PRK02929.1"/>
    <property type="match status" value="1"/>
</dbReference>
<dbReference type="PANTHER" id="PTHR38464">
    <property type="entry name" value="L-ARABINOSE ISOMERASE"/>
    <property type="match status" value="1"/>
</dbReference>
<dbReference type="PANTHER" id="PTHR38464:SF1">
    <property type="entry name" value="L-ARABINOSE ISOMERASE"/>
    <property type="match status" value="1"/>
</dbReference>
<dbReference type="Pfam" id="PF24856">
    <property type="entry name" value="AraA_central"/>
    <property type="match status" value="1"/>
</dbReference>
<dbReference type="Pfam" id="PF02610">
    <property type="entry name" value="AraA_N"/>
    <property type="match status" value="1"/>
</dbReference>
<dbReference type="Pfam" id="PF11762">
    <property type="entry name" value="Arabinose_Iso_C"/>
    <property type="match status" value="1"/>
</dbReference>
<dbReference type="PIRSF" id="PIRSF001478">
    <property type="entry name" value="L-ara_isomerase"/>
    <property type="match status" value="1"/>
</dbReference>
<dbReference type="SUPFAM" id="SSF50443">
    <property type="entry name" value="FucI/AraA C-terminal domain-like"/>
    <property type="match status" value="1"/>
</dbReference>
<dbReference type="SUPFAM" id="SSF53743">
    <property type="entry name" value="FucI/AraA N-terminal and middle domains"/>
    <property type="match status" value="1"/>
</dbReference>
<sequence length="496" mass="56543">MIDLKQYEFWFLVGSQYLYGLETLKKVEQQASKIVDSLNDDPIFPSKIVLKPVLKSSSEITEIFEKANADPKCAGVIVWMHTFSPSKMWIRGLSINKKPLLHLHTQYNREIPWDTIDMDYMNLNQSAHGDREHGFIHARMRLPRKVVVGHWEEKEVREKIAKWMRVACAIQDGRTGQIVRFGDNMREVASTEGDKVEAQIKLGWSINTWGVGELAERVKAVPDNEVEELLTEYREKYIMPEDEYSLKAIREQAKIEIALREFLKEKNAIAFTTTFEDLHDLPQLPGLAVQRLMEEGYGFGAEGDWKAAGLVRAIKVMGTGLPGGTSFMEDYTYHLTPGNELVLGAHMLEVCPTIAKEKPRIEVHPLSIGGKADPARLVFDGQEGPAVNASIVDMGNRFRLVVNKVLSVPIERKMPKLPTARVLWKPLPDFKRATTAWILAGGSHHTAFSTAIDVEYLIDWAEALEIEYVVIDENLDLEDFKKELRWNELYWGLLKR</sequence>
<name>ARAA_THEP1</name>
<gene>
    <name evidence="1" type="primary">araA</name>
    <name type="ordered locus">Tpet_0648</name>
</gene>
<organism>
    <name type="scientific">Thermotoga petrophila (strain ATCC BAA-488 / DSM 13995 / JCM 10881 / RKU-1)</name>
    <dbReference type="NCBI Taxonomy" id="390874"/>
    <lineage>
        <taxon>Bacteria</taxon>
        <taxon>Thermotogati</taxon>
        <taxon>Thermotogota</taxon>
        <taxon>Thermotogae</taxon>
        <taxon>Thermotogales</taxon>
        <taxon>Thermotogaceae</taxon>
        <taxon>Thermotoga</taxon>
    </lineage>
</organism>
<protein>
    <recommendedName>
        <fullName evidence="1">L-arabinose isomerase</fullName>
        <ecNumber evidence="1">5.3.1.4</ecNumber>
    </recommendedName>
</protein>
<reference key="1">
    <citation type="submission" date="2007-05" db="EMBL/GenBank/DDBJ databases">
        <title>Complete sequence of Thermotoga petrophila RKU-1.</title>
        <authorList>
            <consortium name="US DOE Joint Genome Institute"/>
            <person name="Copeland A."/>
            <person name="Lucas S."/>
            <person name="Lapidus A."/>
            <person name="Barry K."/>
            <person name="Glavina del Rio T."/>
            <person name="Dalin E."/>
            <person name="Tice H."/>
            <person name="Pitluck S."/>
            <person name="Sims D."/>
            <person name="Brettin T."/>
            <person name="Bruce D."/>
            <person name="Detter J.C."/>
            <person name="Han C."/>
            <person name="Tapia R."/>
            <person name="Schmutz J."/>
            <person name="Larimer F."/>
            <person name="Land M."/>
            <person name="Hauser L."/>
            <person name="Kyrpides N."/>
            <person name="Mikhailova N."/>
            <person name="Nelson K."/>
            <person name="Gogarten J.P."/>
            <person name="Noll K."/>
            <person name="Richardson P."/>
        </authorList>
    </citation>
    <scope>NUCLEOTIDE SEQUENCE [LARGE SCALE GENOMIC DNA]</scope>
    <source>
        <strain>ATCC BAA-488 / DSM 13995 / JCM 10881 / RKU-1</strain>
    </source>
</reference>
<accession>A5IKE5</accession>
<keyword id="KW-0054">Arabinose catabolism</keyword>
<keyword id="KW-0119">Carbohydrate metabolism</keyword>
<keyword id="KW-0413">Isomerase</keyword>
<keyword id="KW-0464">Manganese</keyword>
<keyword id="KW-0479">Metal-binding</keyword>
<proteinExistence type="inferred from homology"/>
<evidence type="ECO:0000255" key="1">
    <source>
        <dbReference type="HAMAP-Rule" id="MF_00519"/>
    </source>
</evidence>